<reference key="1">
    <citation type="submission" date="2006-05" db="EMBL/GenBank/DDBJ databases">
        <title>Complete sequence of chromosome of Silicibacter sp. TM1040.</title>
        <authorList>
            <consortium name="US DOE Joint Genome Institute"/>
            <person name="Copeland A."/>
            <person name="Lucas S."/>
            <person name="Lapidus A."/>
            <person name="Barry K."/>
            <person name="Detter J.C."/>
            <person name="Glavina del Rio T."/>
            <person name="Hammon N."/>
            <person name="Israni S."/>
            <person name="Dalin E."/>
            <person name="Tice H."/>
            <person name="Pitluck S."/>
            <person name="Brettin T."/>
            <person name="Bruce D."/>
            <person name="Han C."/>
            <person name="Tapia R."/>
            <person name="Goodwin L."/>
            <person name="Thompson L.S."/>
            <person name="Gilna P."/>
            <person name="Schmutz J."/>
            <person name="Larimer F."/>
            <person name="Land M."/>
            <person name="Hauser L."/>
            <person name="Kyrpides N."/>
            <person name="Kim E."/>
            <person name="Belas R."/>
            <person name="Moran M.A."/>
            <person name="Buchan A."/>
            <person name="Gonzalez J.M."/>
            <person name="Schell M.A."/>
            <person name="Sun F."/>
            <person name="Richardson P."/>
        </authorList>
    </citation>
    <scope>NUCLEOTIDE SEQUENCE [LARGE SCALE GENOMIC DNA]</scope>
    <source>
        <strain>TM1040</strain>
    </source>
</reference>
<gene>
    <name evidence="1" type="primary">acpP</name>
    <name type="ordered locus">TM1040_1052</name>
</gene>
<comment type="function">
    <text evidence="1">Carrier of the growing fatty acid chain in fatty acid biosynthesis.</text>
</comment>
<comment type="pathway">
    <text evidence="1">Lipid metabolism; fatty acid biosynthesis.</text>
</comment>
<comment type="subcellular location">
    <subcellularLocation>
        <location evidence="1">Cytoplasm</location>
    </subcellularLocation>
</comment>
<comment type="PTM">
    <text evidence="1">4'-phosphopantetheine is transferred from CoA to a specific serine of apo-ACP by AcpS. This modification is essential for activity because fatty acids are bound in thioester linkage to the sulfhydryl of the prosthetic group.</text>
</comment>
<comment type="similarity">
    <text evidence="1">Belongs to the acyl carrier protein (ACP) family.</text>
</comment>
<name>ACP_RUEST</name>
<sequence>MSDVADRVKKIVVEHLGVEEDKVTESASFIDDLGADSLDTVELVMAFEEEFGIEIPDDAAETIQTFGDAVKFISEAS</sequence>
<protein>
    <recommendedName>
        <fullName evidence="1">Acyl carrier protein</fullName>
        <shortName evidence="1">ACP</shortName>
    </recommendedName>
</protein>
<accession>Q1GHT1</accession>
<proteinExistence type="inferred from homology"/>
<keyword id="KW-0963">Cytoplasm</keyword>
<keyword id="KW-0275">Fatty acid biosynthesis</keyword>
<keyword id="KW-0276">Fatty acid metabolism</keyword>
<keyword id="KW-0444">Lipid biosynthesis</keyword>
<keyword id="KW-0443">Lipid metabolism</keyword>
<keyword id="KW-0596">Phosphopantetheine</keyword>
<keyword id="KW-0597">Phosphoprotein</keyword>
<keyword id="KW-1185">Reference proteome</keyword>
<dbReference type="EMBL" id="CP000377">
    <property type="protein sequence ID" value="ABF63785.1"/>
    <property type="molecule type" value="Genomic_DNA"/>
</dbReference>
<dbReference type="RefSeq" id="WP_005645147.1">
    <property type="nucleotide sequence ID" value="NC_008044.1"/>
</dbReference>
<dbReference type="SMR" id="Q1GHT1"/>
<dbReference type="STRING" id="292414.TM1040_1052"/>
<dbReference type="KEGG" id="sit:TM1040_1052"/>
<dbReference type="eggNOG" id="COG0236">
    <property type="taxonomic scope" value="Bacteria"/>
</dbReference>
<dbReference type="HOGENOM" id="CLU_108696_5_1_5"/>
<dbReference type="OrthoDB" id="9804551at2"/>
<dbReference type="UniPathway" id="UPA00094"/>
<dbReference type="Proteomes" id="UP000000636">
    <property type="component" value="Chromosome"/>
</dbReference>
<dbReference type="GO" id="GO:0005829">
    <property type="term" value="C:cytosol"/>
    <property type="evidence" value="ECO:0007669"/>
    <property type="project" value="TreeGrafter"/>
</dbReference>
<dbReference type="GO" id="GO:0016020">
    <property type="term" value="C:membrane"/>
    <property type="evidence" value="ECO:0007669"/>
    <property type="project" value="GOC"/>
</dbReference>
<dbReference type="GO" id="GO:0000035">
    <property type="term" value="F:acyl binding"/>
    <property type="evidence" value="ECO:0007669"/>
    <property type="project" value="TreeGrafter"/>
</dbReference>
<dbReference type="GO" id="GO:0000036">
    <property type="term" value="F:acyl carrier activity"/>
    <property type="evidence" value="ECO:0007669"/>
    <property type="project" value="UniProtKB-UniRule"/>
</dbReference>
<dbReference type="GO" id="GO:0031177">
    <property type="term" value="F:phosphopantetheine binding"/>
    <property type="evidence" value="ECO:0007669"/>
    <property type="project" value="InterPro"/>
</dbReference>
<dbReference type="GO" id="GO:0009245">
    <property type="term" value="P:lipid A biosynthetic process"/>
    <property type="evidence" value="ECO:0007669"/>
    <property type="project" value="TreeGrafter"/>
</dbReference>
<dbReference type="FunFam" id="1.10.1200.10:FF:000001">
    <property type="entry name" value="Acyl carrier protein"/>
    <property type="match status" value="1"/>
</dbReference>
<dbReference type="Gene3D" id="1.10.1200.10">
    <property type="entry name" value="ACP-like"/>
    <property type="match status" value="1"/>
</dbReference>
<dbReference type="HAMAP" id="MF_01217">
    <property type="entry name" value="Acyl_carrier"/>
    <property type="match status" value="1"/>
</dbReference>
<dbReference type="InterPro" id="IPR003231">
    <property type="entry name" value="ACP"/>
</dbReference>
<dbReference type="InterPro" id="IPR036736">
    <property type="entry name" value="ACP-like_sf"/>
</dbReference>
<dbReference type="InterPro" id="IPR020806">
    <property type="entry name" value="PKS_PP-bd"/>
</dbReference>
<dbReference type="InterPro" id="IPR009081">
    <property type="entry name" value="PP-bd_ACP"/>
</dbReference>
<dbReference type="InterPro" id="IPR006162">
    <property type="entry name" value="Ppantetheine_attach_site"/>
</dbReference>
<dbReference type="NCBIfam" id="TIGR00517">
    <property type="entry name" value="acyl_carrier"/>
    <property type="match status" value="1"/>
</dbReference>
<dbReference type="NCBIfam" id="NF002148">
    <property type="entry name" value="PRK00982.1-2"/>
    <property type="match status" value="1"/>
</dbReference>
<dbReference type="NCBIfam" id="NF002149">
    <property type="entry name" value="PRK00982.1-3"/>
    <property type="match status" value="1"/>
</dbReference>
<dbReference type="NCBIfam" id="NF002150">
    <property type="entry name" value="PRK00982.1-4"/>
    <property type="match status" value="1"/>
</dbReference>
<dbReference type="NCBIfam" id="NF002151">
    <property type="entry name" value="PRK00982.1-5"/>
    <property type="match status" value="1"/>
</dbReference>
<dbReference type="PANTHER" id="PTHR20863">
    <property type="entry name" value="ACYL CARRIER PROTEIN"/>
    <property type="match status" value="1"/>
</dbReference>
<dbReference type="PANTHER" id="PTHR20863:SF76">
    <property type="entry name" value="CARRIER DOMAIN-CONTAINING PROTEIN"/>
    <property type="match status" value="1"/>
</dbReference>
<dbReference type="Pfam" id="PF00550">
    <property type="entry name" value="PP-binding"/>
    <property type="match status" value="1"/>
</dbReference>
<dbReference type="SMART" id="SM00823">
    <property type="entry name" value="PKS_PP"/>
    <property type="match status" value="1"/>
</dbReference>
<dbReference type="SUPFAM" id="SSF47336">
    <property type="entry name" value="ACP-like"/>
    <property type="match status" value="1"/>
</dbReference>
<dbReference type="PROSITE" id="PS50075">
    <property type="entry name" value="CARRIER"/>
    <property type="match status" value="1"/>
</dbReference>
<dbReference type="PROSITE" id="PS00012">
    <property type="entry name" value="PHOSPHOPANTETHEINE"/>
    <property type="match status" value="1"/>
</dbReference>
<organism>
    <name type="scientific">Ruegeria sp. (strain TM1040)</name>
    <name type="common">Silicibacter sp.</name>
    <dbReference type="NCBI Taxonomy" id="292414"/>
    <lineage>
        <taxon>Bacteria</taxon>
        <taxon>Pseudomonadati</taxon>
        <taxon>Pseudomonadota</taxon>
        <taxon>Alphaproteobacteria</taxon>
        <taxon>Rhodobacterales</taxon>
        <taxon>Roseobacteraceae</taxon>
        <taxon>Ruegeria</taxon>
    </lineage>
</organism>
<evidence type="ECO:0000255" key="1">
    <source>
        <dbReference type="HAMAP-Rule" id="MF_01217"/>
    </source>
</evidence>
<evidence type="ECO:0000255" key="2">
    <source>
        <dbReference type="PROSITE-ProRule" id="PRU00258"/>
    </source>
</evidence>
<feature type="chain" id="PRO_1000066694" description="Acyl carrier protein">
    <location>
        <begin position="1"/>
        <end position="77"/>
    </location>
</feature>
<feature type="domain" description="Carrier" evidence="2">
    <location>
        <begin position="2"/>
        <end position="77"/>
    </location>
</feature>
<feature type="modified residue" description="O-(pantetheine 4'-phosphoryl)serine" evidence="2">
    <location>
        <position position="37"/>
    </location>
</feature>